<comment type="function">
    <text evidence="1">Catalyzes the radical-mediated insertion of two sulfur atoms into the C-6 and C-8 positions of the octanoyl moiety bound to the lipoyl domains of lipoate-dependent enzymes, thereby converting the octanoylated domains into lipoylated derivatives.</text>
</comment>
<comment type="catalytic activity">
    <reaction evidence="1">
        <text>[[Fe-S] cluster scaffold protein carrying a second [4Fe-4S](2+) cluster] + N(6)-octanoyl-L-lysyl-[protein] + 2 oxidized [2Fe-2S]-[ferredoxin] + 2 S-adenosyl-L-methionine + 4 H(+) = [[Fe-S] cluster scaffold protein] + N(6)-[(R)-dihydrolipoyl]-L-lysyl-[protein] + 4 Fe(3+) + 2 hydrogen sulfide + 2 5'-deoxyadenosine + 2 L-methionine + 2 reduced [2Fe-2S]-[ferredoxin]</text>
        <dbReference type="Rhea" id="RHEA:16585"/>
        <dbReference type="Rhea" id="RHEA-COMP:9928"/>
        <dbReference type="Rhea" id="RHEA-COMP:10000"/>
        <dbReference type="Rhea" id="RHEA-COMP:10001"/>
        <dbReference type="Rhea" id="RHEA-COMP:10475"/>
        <dbReference type="Rhea" id="RHEA-COMP:14568"/>
        <dbReference type="Rhea" id="RHEA-COMP:14569"/>
        <dbReference type="ChEBI" id="CHEBI:15378"/>
        <dbReference type="ChEBI" id="CHEBI:17319"/>
        <dbReference type="ChEBI" id="CHEBI:29034"/>
        <dbReference type="ChEBI" id="CHEBI:29919"/>
        <dbReference type="ChEBI" id="CHEBI:33722"/>
        <dbReference type="ChEBI" id="CHEBI:33737"/>
        <dbReference type="ChEBI" id="CHEBI:33738"/>
        <dbReference type="ChEBI" id="CHEBI:57844"/>
        <dbReference type="ChEBI" id="CHEBI:59789"/>
        <dbReference type="ChEBI" id="CHEBI:78809"/>
        <dbReference type="ChEBI" id="CHEBI:83100"/>
        <dbReference type="EC" id="2.8.1.8"/>
    </reaction>
</comment>
<comment type="cofactor">
    <cofactor evidence="1">
        <name>[4Fe-4S] cluster</name>
        <dbReference type="ChEBI" id="CHEBI:49883"/>
    </cofactor>
    <text evidence="1">Binds 2 [4Fe-4S] clusters per subunit. One cluster is coordinated with 3 cysteines and an exchangeable S-adenosyl-L-methionine.</text>
</comment>
<comment type="pathway">
    <text evidence="1">Protein modification; protein lipoylation via endogenous pathway; protein N(6)-(lipoyl)lysine from octanoyl-[acyl-carrier-protein].</text>
</comment>
<comment type="subcellular location">
    <subcellularLocation>
        <location evidence="1">Cytoplasm</location>
    </subcellularLocation>
</comment>
<comment type="similarity">
    <text evidence="1">Belongs to the radical SAM superfamily. Lipoyl synthase family.</text>
</comment>
<sequence length="298" mass="33702">MTKQTEYKRKPEWLKIKLNTNENYTGLKKMMRSKNLHTVCEEAKCPNIHECWAVRKTATFMILGAVCTRACRFCAVKTGLPTELDLQEPERVADSVVQMGLKHVVITAVARDDLKDGGAAVFAETVRAVRRKNPFTSIEVLPSDMGGVEENLKMLMDAKPDILNHNIETVRRLSDRVRARAKYDRSLEFLRRAKEMQPDIPTKSSIMVGLGETREDLIEAMDDLRANNVDILTLGQYLQPSKKHLPVLKYYPPAEFAELKEIALSKGFSHCEAGPLVRSSYHADEQVRSAKEKTAEAK</sequence>
<gene>
    <name evidence="1" type="primary">lipA</name>
    <name type="ordered locus">BCA_5104</name>
</gene>
<feature type="chain" id="PRO_1000124620" description="Lipoyl synthase">
    <location>
        <begin position="1"/>
        <end position="298"/>
    </location>
</feature>
<feature type="domain" description="Radical SAM core" evidence="2">
    <location>
        <begin position="53"/>
        <end position="269"/>
    </location>
</feature>
<feature type="binding site" evidence="1">
    <location>
        <position position="40"/>
    </location>
    <ligand>
        <name>[4Fe-4S] cluster</name>
        <dbReference type="ChEBI" id="CHEBI:49883"/>
        <label>1</label>
    </ligand>
</feature>
<feature type="binding site" evidence="1">
    <location>
        <position position="45"/>
    </location>
    <ligand>
        <name>[4Fe-4S] cluster</name>
        <dbReference type="ChEBI" id="CHEBI:49883"/>
        <label>1</label>
    </ligand>
</feature>
<feature type="binding site" evidence="1">
    <location>
        <position position="51"/>
    </location>
    <ligand>
        <name>[4Fe-4S] cluster</name>
        <dbReference type="ChEBI" id="CHEBI:49883"/>
        <label>1</label>
    </ligand>
</feature>
<feature type="binding site" evidence="1">
    <location>
        <position position="67"/>
    </location>
    <ligand>
        <name>[4Fe-4S] cluster</name>
        <dbReference type="ChEBI" id="CHEBI:49883"/>
        <label>2</label>
        <note>4Fe-4S-S-AdoMet</note>
    </ligand>
</feature>
<feature type="binding site" evidence="1">
    <location>
        <position position="71"/>
    </location>
    <ligand>
        <name>[4Fe-4S] cluster</name>
        <dbReference type="ChEBI" id="CHEBI:49883"/>
        <label>2</label>
        <note>4Fe-4S-S-AdoMet</note>
    </ligand>
</feature>
<feature type="binding site" evidence="1">
    <location>
        <position position="74"/>
    </location>
    <ligand>
        <name>[4Fe-4S] cluster</name>
        <dbReference type="ChEBI" id="CHEBI:49883"/>
        <label>2</label>
        <note>4Fe-4S-S-AdoMet</note>
    </ligand>
</feature>
<feature type="binding site" evidence="1">
    <location>
        <position position="280"/>
    </location>
    <ligand>
        <name>[4Fe-4S] cluster</name>
        <dbReference type="ChEBI" id="CHEBI:49883"/>
        <label>1</label>
    </ligand>
</feature>
<accession>C1EY56</accession>
<keyword id="KW-0004">4Fe-4S</keyword>
<keyword id="KW-0963">Cytoplasm</keyword>
<keyword id="KW-0408">Iron</keyword>
<keyword id="KW-0411">Iron-sulfur</keyword>
<keyword id="KW-0479">Metal-binding</keyword>
<keyword id="KW-0949">S-adenosyl-L-methionine</keyword>
<keyword id="KW-0808">Transferase</keyword>
<dbReference type="EC" id="2.8.1.8" evidence="1"/>
<dbReference type="EMBL" id="CP001407">
    <property type="protein sequence ID" value="ACO28361.1"/>
    <property type="molecule type" value="Genomic_DNA"/>
</dbReference>
<dbReference type="RefSeq" id="WP_000166369.1">
    <property type="nucleotide sequence ID" value="NZ_CP009318.1"/>
</dbReference>
<dbReference type="SMR" id="C1EY56"/>
<dbReference type="GeneID" id="51136693"/>
<dbReference type="KEGG" id="bcx:BCA_5104"/>
<dbReference type="PATRIC" id="fig|572264.18.peg.5026"/>
<dbReference type="Proteomes" id="UP000002210">
    <property type="component" value="Chromosome"/>
</dbReference>
<dbReference type="GO" id="GO:0005737">
    <property type="term" value="C:cytoplasm"/>
    <property type="evidence" value="ECO:0007669"/>
    <property type="project" value="UniProtKB-SubCell"/>
</dbReference>
<dbReference type="GO" id="GO:0051539">
    <property type="term" value="F:4 iron, 4 sulfur cluster binding"/>
    <property type="evidence" value="ECO:0007669"/>
    <property type="project" value="UniProtKB-UniRule"/>
</dbReference>
<dbReference type="GO" id="GO:0016992">
    <property type="term" value="F:lipoate synthase activity"/>
    <property type="evidence" value="ECO:0007669"/>
    <property type="project" value="UniProtKB-UniRule"/>
</dbReference>
<dbReference type="GO" id="GO:0046872">
    <property type="term" value="F:metal ion binding"/>
    <property type="evidence" value="ECO:0007669"/>
    <property type="project" value="UniProtKB-KW"/>
</dbReference>
<dbReference type="CDD" id="cd01335">
    <property type="entry name" value="Radical_SAM"/>
    <property type="match status" value="1"/>
</dbReference>
<dbReference type="FunFam" id="3.20.20.70:FF:000040">
    <property type="entry name" value="Lipoyl synthase"/>
    <property type="match status" value="1"/>
</dbReference>
<dbReference type="Gene3D" id="3.20.20.70">
    <property type="entry name" value="Aldolase class I"/>
    <property type="match status" value="1"/>
</dbReference>
<dbReference type="HAMAP" id="MF_00206">
    <property type="entry name" value="Lipoyl_synth"/>
    <property type="match status" value="1"/>
</dbReference>
<dbReference type="InterPro" id="IPR013785">
    <property type="entry name" value="Aldolase_TIM"/>
</dbReference>
<dbReference type="InterPro" id="IPR006638">
    <property type="entry name" value="Elp3/MiaA/NifB-like_rSAM"/>
</dbReference>
<dbReference type="InterPro" id="IPR031691">
    <property type="entry name" value="LIAS_N"/>
</dbReference>
<dbReference type="InterPro" id="IPR003698">
    <property type="entry name" value="Lipoyl_synth"/>
</dbReference>
<dbReference type="InterPro" id="IPR007197">
    <property type="entry name" value="rSAM"/>
</dbReference>
<dbReference type="NCBIfam" id="TIGR00510">
    <property type="entry name" value="lipA"/>
    <property type="match status" value="1"/>
</dbReference>
<dbReference type="NCBIfam" id="NF004019">
    <property type="entry name" value="PRK05481.1"/>
    <property type="match status" value="1"/>
</dbReference>
<dbReference type="NCBIfam" id="NF009544">
    <property type="entry name" value="PRK12928.1"/>
    <property type="match status" value="1"/>
</dbReference>
<dbReference type="PANTHER" id="PTHR10949">
    <property type="entry name" value="LIPOYL SYNTHASE"/>
    <property type="match status" value="1"/>
</dbReference>
<dbReference type="PANTHER" id="PTHR10949:SF0">
    <property type="entry name" value="LIPOYL SYNTHASE, MITOCHONDRIAL"/>
    <property type="match status" value="1"/>
</dbReference>
<dbReference type="Pfam" id="PF16881">
    <property type="entry name" value="LIAS_N"/>
    <property type="match status" value="1"/>
</dbReference>
<dbReference type="Pfam" id="PF04055">
    <property type="entry name" value="Radical_SAM"/>
    <property type="match status" value="1"/>
</dbReference>
<dbReference type="PIRSF" id="PIRSF005963">
    <property type="entry name" value="Lipoyl_synth"/>
    <property type="match status" value="1"/>
</dbReference>
<dbReference type="SFLD" id="SFLDF00271">
    <property type="entry name" value="lipoyl_synthase"/>
    <property type="match status" value="1"/>
</dbReference>
<dbReference type="SFLD" id="SFLDG01058">
    <property type="entry name" value="lipoyl_synthase_like"/>
    <property type="match status" value="1"/>
</dbReference>
<dbReference type="SMART" id="SM00729">
    <property type="entry name" value="Elp3"/>
    <property type="match status" value="1"/>
</dbReference>
<dbReference type="SUPFAM" id="SSF102114">
    <property type="entry name" value="Radical SAM enzymes"/>
    <property type="match status" value="1"/>
</dbReference>
<dbReference type="PROSITE" id="PS51918">
    <property type="entry name" value="RADICAL_SAM"/>
    <property type="match status" value="1"/>
</dbReference>
<name>LIPA_BACC3</name>
<organism>
    <name type="scientific">Bacillus cereus (strain 03BB102)</name>
    <dbReference type="NCBI Taxonomy" id="572264"/>
    <lineage>
        <taxon>Bacteria</taxon>
        <taxon>Bacillati</taxon>
        <taxon>Bacillota</taxon>
        <taxon>Bacilli</taxon>
        <taxon>Bacillales</taxon>
        <taxon>Bacillaceae</taxon>
        <taxon>Bacillus</taxon>
        <taxon>Bacillus cereus group</taxon>
    </lineage>
</organism>
<evidence type="ECO:0000255" key="1">
    <source>
        <dbReference type="HAMAP-Rule" id="MF_00206"/>
    </source>
</evidence>
<evidence type="ECO:0000255" key="2">
    <source>
        <dbReference type="PROSITE-ProRule" id="PRU01266"/>
    </source>
</evidence>
<reference key="1">
    <citation type="submission" date="2009-02" db="EMBL/GenBank/DDBJ databases">
        <title>Genome sequence of Bacillus cereus 03BB102.</title>
        <authorList>
            <person name="Dodson R.J."/>
            <person name="Jackson P."/>
            <person name="Munk A.C."/>
            <person name="Brettin T."/>
            <person name="Bruce D."/>
            <person name="Detter C."/>
            <person name="Tapia R."/>
            <person name="Han C."/>
            <person name="Sutton G."/>
            <person name="Sims D."/>
        </authorList>
    </citation>
    <scope>NUCLEOTIDE SEQUENCE [LARGE SCALE GENOMIC DNA]</scope>
    <source>
        <strain>03BB102</strain>
    </source>
</reference>
<protein>
    <recommendedName>
        <fullName evidence="1">Lipoyl synthase</fullName>
        <ecNumber evidence="1">2.8.1.8</ecNumber>
    </recommendedName>
    <alternativeName>
        <fullName evidence="1">Lip-syn</fullName>
        <shortName evidence="1">LS</shortName>
    </alternativeName>
    <alternativeName>
        <fullName evidence="1">Lipoate synthase</fullName>
    </alternativeName>
    <alternativeName>
        <fullName evidence="1">Lipoic acid synthase</fullName>
    </alternativeName>
    <alternativeName>
        <fullName evidence="1">Sulfur insertion protein LipA</fullName>
    </alternativeName>
</protein>
<proteinExistence type="inferred from homology"/>